<dbReference type="EMBL" id="BX936398">
    <property type="protein sequence ID" value="CAH22241.1"/>
    <property type="molecule type" value="Genomic_DNA"/>
</dbReference>
<dbReference type="RefSeq" id="WP_002221800.1">
    <property type="nucleotide sequence ID" value="NZ_CP009712.1"/>
</dbReference>
<dbReference type="SMR" id="Q667I9"/>
<dbReference type="GeneID" id="57977517"/>
<dbReference type="KEGG" id="ypo:BZ17_3618"/>
<dbReference type="KEGG" id="yps:YPTB3003"/>
<dbReference type="PATRIC" id="fig|273123.14.peg.3798"/>
<dbReference type="Proteomes" id="UP000001011">
    <property type="component" value="Chromosome"/>
</dbReference>
<dbReference type="GO" id="GO:0022627">
    <property type="term" value="C:cytosolic small ribosomal subunit"/>
    <property type="evidence" value="ECO:0007669"/>
    <property type="project" value="TreeGrafter"/>
</dbReference>
<dbReference type="GO" id="GO:0003735">
    <property type="term" value="F:structural constituent of ribosome"/>
    <property type="evidence" value="ECO:0007669"/>
    <property type="project" value="InterPro"/>
</dbReference>
<dbReference type="GO" id="GO:0006412">
    <property type="term" value="P:translation"/>
    <property type="evidence" value="ECO:0007669"/>
    <property type="project" value="UniProtKB-UniRule"/>
</dbReference>
<dbReference type="CDD" id="cd01425">
    <property type="entry name" value="RPS2"/>
    <property type="match status" value="1"/>
</dbReference>
<dbReference type="FunFam" id="1.10.287.610:FF:000001">
    <property type="entry name" value="30S ribosomal protein S2"/>
    <property type="match status" value="1"/>
</dbReference>
<dbReference type="Gene3D" id="3.40.50.10490">
    <property type="entry name" value="Glucose-6-phosphate isomerase like protein, domain 1"/>
    <property type="match status" value="1"/>
</dbReference>
<dbReference type="Gene3D" id="1.10.287.610">
    <property type="entry name" value="Helix hairpin bin"/>
    <property type="match status" value="1"/>
</dbReference>
<dbReference type="HAMAP" id="MF_00291_B">
    <property type="entry name" value="Ribosomal_uS2_B"/>
    <property type="match status" value="1"/>
</dbReference>
<dbReference type="InterPro" id="IPR001865">
    <property type="entry name" value="Ribosomal_uS2"/>
</dbReference>
<dbReference type="InterPro" id="IPR005706">
    <property type="entry name" value="Ribosomal_uS2_bac/mit/plastid"/>
</dbReference>
<dbReference type="InterPro" id="IPR018130">
    <property type="entry name" value="Ribosomal_uS2_CS"/>
</dbReference>
<dbReference type="InterPro" id="IPR023591">
    <property type="entry name" value="Ribosomal_uS2_flav_dom_sf"/>
</dbReference>
<dbReference type="NCBIfam" id="TIGR01011">
    <property type="entry name" value="rpsB_bact"/>
    <property type="match status" value="1"/>
</dbReference>
<dbReference type="PANTHER" id="PTHR12534">
    <property type="entry name" value="30S RIBOSOMAL PROTEIN S2 PROKARYOTIC AND ORGANELLAR"/>
    <property type="match status" value="1"/>
</dbReference>
<dbReference type="PANTHER" id="PTHR12534:SF0">
    <property type="entry name" value="SMALL RIBOSOMAL SUBUNIT PROTEIN US2M"/>
    <property type="match status" value="1"/>
</dbReference>
<dbReference type="Pfam" id="PF00318">
    <property type="entry name" value="Ribosomal_S2"/>
    <property type="match status" value="1"/>
</dbReference>
<dbReference type="PRINTS" id="PR00395">
    <property type="entry name" value="RIBOSOMALS2"/>
</dbReference>
<dbReference type="SUPFAM" id="SSF52313">
    <property type="entry name" value="Ribosomal protein S2"/>
    <property type="match status" value="1"/>
</dbReference>
<dbReference type="PROSITE" id="PS00962">
    <property type="entry name" value="RIBOSOMAL_S2_1"/>
    <property type="match status" value="1"/>
</dbReference>
<dbReference type="PROSITE" id="PS00963">
    <property type="entry name" value="RIBOSOMAL_S2_2"/>
    <property type="match status" value="1"/>
</dbReference>
<feature type="chain" id="PRO_0000134283" description="Small ribosomal subunit protein uS2">
    <location>
        <begin position="1"/>
        <end position="241"/>
    </location>
</feature>
<gene>
    <name evidence="1" type="primary">rpsB</name>
    <name type="ordered locus">YPTB3003</name>
</gene>
<accession>Q667I9</accession>
<proteinExistence type="inferred from homology"/>
<evidence type="ECO:0000255" key="1">
    <source>
        <dbReference type="HAMAP-Rule" id="MF_00291"/>
    </source>
</evidence>
<evidence type="ECO:0000305" key="2"/>
<reference key="1">
    <citation type="journal article" date="2004" name="Proc. Natl. Acad. Sci. U.S.A.">
        <title>Insights into the evolution of Yersinia pestis through whole-genome comparison with Yersinia pseudotuberculosis.</title>
        <authorList>
            <person name="Chain P.S.G."/>
            <person name="Carniel E."/>
            <person name="Larimer F.W."/>
            <person name="Lamerdin J."/>
            <person name="Stoutland P.O."/>
            <person name="Regala W.M."/>
            <person name="Georgescu A.M."/>
            <person name="Vergez L.M."/>
            <person name="Land M.L."/>
            <person name="Motin V.L."/>
            <person name="Brubaker R.R."/>
            <person name="Fowler J."/>
            <person name="Hinnebusch J."/>
            <person name="Marceau M."/>
            <person name="Medigue C."/>
            <person name="Simonet M."/>
            <person name="Chenal-Francisque V."/>
            <person name="Souza B."/>
            <person name="Dacheux D."/>
            <person name="Elliott J.M."/>
            <person name="Derbise A."/>
            <person name="Hauser L.J."/>
            <person name="Garcia E."/>
        </authorList>
    </citation>
    <scope>NUCLEOTIDE SEQUENCE [LARGE SCALE GENOMIC DNA]</scope>
    <source>
        <strain>IP32953</strain>
    </source>
</reference>
<protein>
    <recommendedName>
        <fullName evidence="1">Small ribosomal subunit protein uS2</fullName>
    </recommendedName>
    <alternativeName>
        <fullName evidence="2">30S ribosomal protein S2</fullName>
    </alternativeName>
</protein>
<organism>
    <name type="scientific">Yersinia pseudotuberculosis serotype I (strain IP32953)</name>
    <dbReference type="NCBI Taxonomy" id="273123"/>
    <lineage>
        <taxon>Bacteria</taxon>
        <taxon>Pseudomonadati</taxon>
        <taxon>Pseudomonadota</taxon>
        <taxon>Gammaproteobacteria</taxon>
        <taxon>Enterobacterales</taxon>
        <taxon>Yersiniaceae</taxon>
        <taxon>Yersinia</taxon>
    </lineage>
</organism>
<sequence>MATVSMRDMLQAGVHFGHQTRYWNPKMKPFIFGARNKVHIINLEKTVPMFNEALAELTKISSRKGKILFVGTKRAASEAVKEAANNCDQFFVNHRWLGGMLTNWKTVRQSIKRLKDLEIQSQDGTFDKLTKKEALMRTRELNKLENSLGGIKDMGGLPDALFVVDADHEHIAIKEANNLGIPVFSIVDTNSDPDGVDFIIPGNDDAIRAVKLYLGAVATAVREGRSQDLAVQAEESFVEAE</sequence>
<name>RS2_YERPS</name>
<comment type="similarity">
    <text evidence="1">Belongs to the universal ribosomal protein uS2 family.</text>
</comment>
<keyword id="KW-0687">Ribonucleoprotein</keyword>
<keyword id="KW-0689">Ribosomal protein</keyword>